<protein>
    <recommendedName>
        <fullName evidence="12">Tricyclene synthase, chloroplastic</fullName>
        <ecNumber evidence="5">4.2.3.105</ecNumber>
    </recommendedName>
    <alternativeName>
        <fullName evidence="11">(E)-beta-ocimene synthase 0e23</fullName>
        <ecNumber evidence="5">4.2.3.106</ecNumber>
    </alternativeName>
    <alternativeName>
        <fullName evidence="11">Myrcene synthase 1</fullName>
        <ecNumber evidence="5">4.2.3.15</ecNumber>
    </alternativeName>
    <alternativeName>
        <fullName evidence="11">Terpenoid synthase 10</fullName>
        <shortName evidence="11">AtTPS10</shortName>
    </alternativeName>
</protein>
<organism>
    <name type="scientific">Arabidopsis thaliana</name>
    <name type="common">Mouse-ear cress</name>
    <dbReference type="NCBI Taxonomy" id="3702"/>
    <lineage>
        <taxon>Eukaryota</taxon>
        <taxon>Viridiplantae</taxon>
        <taxon>Streptophyta</taxon>
        <taxon>Embryophyta</taxon>
        <taxon>Tracheophyta</taxon>
        <taxon>Spermatophyta</taxon>
        <taxon>Magnoliopsida</taxon>
        <taxon>eudicotyledons</taxon>
        <taxon>Gunneridae</taxon>
        <taxon>Pentapetalae</taxon>
        <taxon>rosids</taxon>
        <taxon>malvids</taxon>
        <taxon>Brassicales</taxon>
        <taxon>Brassicaceae</taxon>
        <taxon>Camelineae</taxon>
        <taxon>Arabidopsis</taxon>
    </lineage>
</organism>
<keyword id="KW-0150">Chloroplast</keyword>
<keyword id="KW-0456">Lyase</keyword>
<keyword id="KW-0460">Magnesium</keyword>
<keyword id="KW-0464">Manganese</keyword>
<keyword id="KW-0479">Metal-binding</keyword>
<keyword id="KW-0934">Plastid</keyword>
<keyword id="KW-1185">Reference proteome</keyword>
<keyword id="KW-0809">Transit peptide</keyword>
<dbReference type="EC" id="4.2.3.105" evidence="5"/>
<dbReference type="EC" id="4.2.3.106" evidence="5"/>
<dbReference type="EC" id="4.2.3.15" evidence="5"/>
<dbReference type="EMBL" id="AC005967">
    <property type="protein sequence ID" value="AAD03382.1"/>
    <property type="molecule type" value="Genomic_DNA"/>
</dbReference>
<dbReference type="EMBL" id="CP002685">
    <property type="protein sequence ID" value="AEC07543.1"/>
    <property type="molecule type" value="Genomic_DNA"/>
</dbReference>
<dbReference type="EMBL" id="BT033153">
    <property type="protein sequence ID" value="ACF41947.1"/>
    <property type="molecule type" value="mRNA"/>
</dbReference>
<dbReference type="EMBL" id="AF178535">
    <property type="protein sequence ID" value="AAG09310.1"/>
    <property type="molecule type" value="mRNA"/>
</dbReference>
<dbReference type="PIR" id="H84633">
    <property type="entry name" value="H84633"/>
</dbReference>
<dbReference type="RefSeq" id="NP_179998.1">
    <property type="nucleotide sequence ID" value="NM_127982.4"/>
</dbReference>
<dbReference type="SMR" id="Q9ZUH4"/>
<dbReference type="FunCoup" id="Q9ZUH4">
    <property type="interactions" value="90"/>
</dbReference>
<dbReference type="STRING" id="3702.Q9ZUH4"/>
<dbReference type="PaxDb" id="3702-AT2G24210.1"/>
<dbReference type="ProteomicsDB" id="228334"/>
<dbReference type="EnsemblPlants" id="AT2G24210.1">
    <property type="protein sequence ID" value="AT2G24210.1"/>
    <property type="gene ID" value="AT2G24210"/>
</dbReference>
<dbReference type="GeneID" id="816955"/>
<dbReference type="Gramene" id="AT2G24210.1">
    <property type="protein sequence ID" value="AT2G24210.1"/>
    <property type="gene ID" value="AT2G24210"/>
</dbReference>
<dbReference type="KEGG" id="ath:AT2G24210"/>
<dbReference type="Araport" id="AT2G24210"/>
<dbReference type="TAIR" id="AT2G24210">
    <property type="gene designation" value="TPS10"/>
</dbReference>
<dbReference type="eggNOG" id="ENOG502QUH3">
    <property type="taxonomic scope" value="Eukaryota"/>
</dbReference>
<dbReference type="HOGENOM" id="CLU_003125_7_1_1"/>
<dbReference type="InParanoid" id="Q9ZUH4"/>
<dbReference type="OMA" id="KMINDMW"/>
<dbReference type="PhylomeDB" id="Q9ZUH4"/>
<dbReference type="BioCyc" id="MetaCyc:AT2G24210-MONOMER"/>
<dbReference type="BRENDA" id="4.2.3.106">
    <property type="organism ID" value="399"/>
</dbReference>
<dbReference type="BRENDA" id="4.2.3.15">
    <property type="organism ID" value="399"/>
</dbReference>
<dbReference type="UniPathway" id="UPA00213"/>
<dbReference type="PRO" id="PR:Q9ZUH4"/>
<dbReference type="Proteomes" id="UP000006548">
    <property type="component" value="Chromosome 2"/>
</dbReference>
<dbReference type="ExpressionAtlas" id="Q9ZUH4">
    <property type="expression patterns" value="baseline and differential"/>
</dbReference>
<dbReference type="GO" id="GO:0009570">
    <property type="term" value="C:chloroplast stroma"/>
    <property type="evidence" value="ECO:0000250"/>
    <property type="project" value="UniProtKB"/>
</dbReference>
<dbReference type="GO" id="GO:0034768">
    <property type="term" value="F:(E)-beta-ocimene synthase activity"/>
    <property type="evidence" value="ECO:0000314"/>
    <property type="project" value="TAIR"/>
</dbReference>
<dbReference type="GO" id="GO:0000287">
    <property type="term" value="F:magnesium ion binding"/>
    <property type="evidence" value="ECO:0007669"/>
    <property type="project" value="InterPro"/>
</dbReference>
<dbReference type="GO" id="GO:0050551">
    <property type="term" value="F:myrcene synthase activity"/>
    <property type="evidence" value="ECO:0000314"/>
    <property type="project" value="TAIR"/>
</dbReference>
<dbReference type="GO" id="GO:0010333">
    <property type="term" value="F:terpene synthase activity"/>
    <property type="evidence" value="ECO:0000250"/>
    <property type="project" value="UniProtKB"/>
</dbReference>
<dbReference type="GO" id="GO:0102701">
    <property type="term" value="F:tricyclene synthase activity"/>
    <property type="evidence" value="ECO:0007669"/>
    <property type="project" value="UniProtKB-EC"/>
</dbReference>
<dbReference type="GO" id="GO:0016102">
    <property type="term" value="P:diterpenoid biosynthetic process"/>
    <property type="evidence" value="ECO:0007669"/>
    <property type="project" value="InterPro"/>
</dbReference>
<dbReference type="GO" id="GO:0016099">
    <property type="term" value="P:monoterpenoid biosynthetic process"/>
    <property type="evidence" value="ECO:0000314"/>
    <property type="project" value="TAIR"/>
</dbReference>
<dbReference type="GO" id="GO:0080027">
    <property type="term" value="P:response to herbivore"/>
    <property type="evidence" value="ECO:0000270"/>
    <property type="project" value="UniProtKB"/>
</dbReference>
<dbReference type="GO" id="GO:0009753">
    <property type="term" value="P:response to jasmonic acid"/>
    <property type="evidence" value="ECO:0000270"/>
    <property type="project" value="TAIR"/>
</dbReference>
<dbReference type="GO" id="GO:0009611">
    <property type="term" value="P:response to wounding"/>
    <property type="evidence" value="ECO:0000270"/>
    <property type="project" value="TAIR"/>
</dbReference>
<dbReference type="CDD" id="cd00684">
    <property type="entry name" value="Terpene_cyclase_plant_C1"/>
    <property type="match status" value="1"/>
</dbReference>
<dbReference type="FunFam" id="1.10.600.10:FF:000007">
    <property type="entry name" value="Isoprene synthase, chloroplastic"/>
    <property type="match status" value="1"/>
</dbReference>
<dbReference type="FunFam" id="1.50.10.130:FF:000001">
    <property type="entry name" value="Isoprene synthase, chloroplastic"/>
    <property type="match status" value="1"/>
</dbReference>
<dbReference type="Gene3D" id="1.10.600.10">
    <property type="entry name" value="Farnesyl Diphosphate Synthase"/>
    <property type="match status" value="1"/>
</dbReference>
<dbReference type="Gene3D" id="1.50.10.130">
    <property type="entry name" value="Terpene synthase, N-terminal domain"/>
    <property type="match status" value="1"/>
</dbReference>
<dbReference type="InterPro" id="IPR008949">
    <property type="entry name" value="Isoprenoid_synthase_dom_sf"/>
</dbReference>
<dbReference type="InterPro" id="IPR034741">
    <property type="entry name" value="Terpene_cyclase-like_1_C"/>
</dbReference>
<dbReference type="InterPro" id="IPR044814">
    <property type="entry name" value="Terpene_cyclase_plant_C1"/>
</dbReference>
<dbReference type="InterPro" id="IPR001906">
    <property type="entry name" value="Terpene_synth_N"/>
</dbReference>
<dbReference type="InterPro" id="IPR036965">
    <property type="entry name" value="Terpene_synth_N_sf"/>
</dbReference>
<dbReference type="InterPro" id="IPR050148">
    <property type="entry name" value="Terpene_synthase-like"/>
</dbReference>
<dbReference type="InterPro" id="IPR005630">
    <property type="entry name" value="Terpene_synthase_metal-bd"/>
</dbReference>
<dbReference type="InterPro" id="IPR008930">
    <property type="entry name" value="Terpenoid_cyclase/PrenylTrfase"/>
</dbReference>
<dbReference type="PANTHER" id="PTHR31225">
    <property type="entry name" value="OS04G0344100 PROTEIN-RELATED"/>
    <property type="match status" value="1"/>
</dbReference>
<dbReference type="PANTHER" id="PTHR31225:SF164">
    <property type="entry name" value="TRICYCLENE SYNTHASE, CHLOROPLASTIC"/>
    <property type="match status" value="1"/>
</dbReference>
<dbReference type="Pfam" id="PF01397">
    <property type="entry name" value="Terpene_synth"/>
    <property type="match status" value="1"/>
</dbReference>
<dbReference type="Pfam" id="PF03936">
    <property type="entry name" value="Terpene_synth_C"/>
    <property type="match status" value="1"/>
</dbReference>
<dbReference type="SFLD" id="SFLDS00005">
    <property type="entry name" value="Isoprenoid_Synthase_Type_I"/>
    <property type="match status" value="1"/>
</dbReference>
<dbReference type="SFLD" id="SFLDG01019">
    <property type="entry name" value="Terpene_Cyclase_Like_1_C_Termi"/>
    <property type="match status" value="1"/>
</dbReference>
<dbReference type="SUPFAM" id="SSF48239">
    <property type="entry name" value="Terpenoid cyclases/Protein prenyltransferases"/>
    <property type="match status" value="1"/>
</dbReference>
<dbReference type="SUPFAM" id="SSF48576">
    <property type="entry name" value="Terpenoid synthases"/>
    <property type="match status" value="1"/>
</dbReference>
<evidence type="ECO:0000250" key="1"/>
<evidence type="ECO:0000250" key="2">
    <source>
        <dbReference type="UniProtKB" id="O81192"/>
    </source>
</evidence>
<evidence type="ECO:0000250" key="3">
    <source>
        <dbReference type="UniProtKB" id="Q40577"/>
    </source>
</evidence>
<evidence type="ECO:0000255" key="4"/>
<evidence type="ECO:0000269" key="5">
    <source>
    </source>
</evidence>
<evidence type="ECO:0000269" key="6">
    <source>
    </source>
</evidence>
<evidence type="ECO:0000269" key="7">
    <source>
    </source>
</evidence>
<evidence type="ECO:0000269" key="8">
    <source>
    </source>
</evidence>
<evidence type="ECO:0000269" key="9">
    <source>
    </source>
</evidence>
<evidence type="ECO:0000269" key="10">
    <source>
    </source>
</evidence>
<evidence type="ECO:0000303" key="11">
    <source>
    </source>
</evidence>
<evidence type="ECO:0000305" key="12"/>
<evidence type="ECO:0000305" key="13">
    <source>
    </source>
</evidence>
<evidence type="ECO:0000312" key="14">
    <source>
        <dbReference type="Araport" id="AT2G24210"/>
    </source>
</evidence>
<evidence type="ECO:0000312" key="15">
    <source>
        <dbReference type="EMBL" id="AAD03382.1"/>
    </source>
</evidence>
<accession>Q9ZUH4</accession>
<accession>B4F7R5</accession>
<accession>Q9FVI8</accession>
<gene>
    <name evidence="11" type="primary">TPS10</name>
    <name evidence="14" type="ordered locus">At2g24210</name>
    <name evidence="15" type="ORF">F27D4.12</name>
</gene>
<sequence length="591" mass="69279">MATLLQIGSGVIYSNALRKTLRRPQSSTCIIVTETTPCNKSPTVQRRSANYQPSRWDHHHLLSVENKFAKDKRVRERDLLKEKVRKMLNDEQKTYLDQLEFIDDLQKLGVSYHFEAEIDNILTSSYKKDRTNIQESDLHATALEFRLFRQHGFNVSEDVFDVFMENCGKFDRDDIYGLISLYEASYLSTKLDKNLQIFIRPFATQQLRDFVDTHSNEDFGSCDMVEIVVQALDMPYYWQMRRLSTRWYIDVYGKRQNYKNLVVVEFAKIDFNIVQAIHQEELKNVSSWWMETGLGKQLYFARDRIVENYFWTIGQIQEPQYGYVRQTMTKINALLTTIDDIYDIYGTLEELQLFTVAFENWDINRLDELPEYMRLCFLVIYNEVNSIACEILRTKNINVIPFLKKSWTDVSKAYLVEAKWYKSGHKPNLEEYMQNARISISSPTIFVHFYCVFSDQLSIQVLETLSQHQQNVVRCSSSVFRLANDLVTSPDELARGDVCKSIQCYMSETGASEDKARSHVRQMINDLWDEMNYEKMAHSSSILHHDFMETVINLARMSQCMYQYGDGHGSPEKAKIVDRVMSLLFNPIPLD</sequence>
<reference key="1">
    <citation type="journal article" date="1999" name="Nature">
        <title>Sequence and analysis of chromosome 2 of the plant Arabidopsis thaliana.</title>
        <authorList>
            <person name="Lin X."/>
            <person name="Kaul S."/>
            <person name="Rounsley S.D."/>
            <person name="Shea T.P."/>
            <person name="Benito M.-I."/>
            <person name="Town C.D."/>
            <person name="Fujii C.Y."/>
            <person name="Mason T.M."/>
            <person name="Bowman C.L."/>
            <person name="Barnstead M.E."/>
            <person name="Feldblyum T.V."/>
            <person name="Buell C.R."/>
            <person name="Ketchum K.A."/>
            <person name="Lee J.J."/>
            <person name="Ronning C.M."/>
            <person name="Koo H.L."/>
            <person name="Moffat K.S."/>
            <person name="Cronin L.A."/>
            <person name="Shen M."/>
            <person name="Pai G."/>
            <person name="Van Aken S."/>
            <person name="Umayam L."/>
            <person name="Tallon L.J."/>
            <person name="Gill J.E."/>
            <person name="Adams M.D."/>
            <person name="Carrera A.J."/>
            <person name="Creasy T.H."/>
            <person name="Goodman H.M."/>
            <person name="Somerville C.R."/>
            <person name="Copenhaver G.P."/>
            <person name="Preuss D."/>
            <person name="Nierman W.C."/>
            <person name="White O."/>
            <person name="Eisen J.A."/>
            <person name="Salzberg S.L."/>
            <person name="Fraser C.M."/>
            <person name="Venter J.C."/>
        </authorList>
    </citation>
    <scope>NUCLEOTIDE SEQUENCE [LARGE SCALE GENOMIC DNA]</scope>
    <source>
        <strain>cv. Columbia</strain>
    </source>
</reference>
<reference key="2">
    <citation type="journal article" date="2017" name="Plant J.">
        <title>Araport11: a complete reannotation of the Arabidopsis thaliana reference genome.</title>
        <authorList>
            <person name="Cheng C.Y."/>
            <person name="Krishnakumar V."/>
            <person name="Chan A.P."/>
            <person name="Thibaud-Nissen F."/>
            <person name="Schobel S."/>
            <person name="Town C.D."/>
        </authorList>
    </citation>
    <scope>GENOME REANNOTATION</scope>
    <source>
        <strain>cv. Columbia</strain>
    </source>
</reference>
<reference key="3">
    <citation type="submission" date="2008-07" db="EMBL/GenBank/DDBJ databases">
        <title>Arabidopsis ORF clones.</title>
        <authorList>
            <person name="de los Reyes C."/>
            <person name="Quan R."/>
            <person name="Chen H."/>
            <person name="Bautista V."/>
            <person name="Kim C.J."/>
            <person name="Ecker J.R."/>
        </authorList>
    </citation>
    <scope>NUCLEOTIDE SEQUENCE [LARGE SCALE MRNA]</scope>
    <source>
        <strain>cv. Columbia</strain>
    </source>
</reference>
<reference key="4">
    <citation type="journal article" date="2000" name="Arch. Biochem. Biophys.">
        <title>Terpenoid secondary metabolism in Arabidopsis thaliana: cDNA cloning, characterization, and functional expression of a myrcene/(E)-beta-ocimene synthase.</title>
        <authorList>
            <person name="Bohlmann J."/>
            <person name="Martin D."/>
            <person name="Oldham N.J."/>
            <person name="Gershenzon J."/>
        </authorList>
    </citation>
    <scope>NUCLEOTIDE SEQUENCE [MRNA] OF 37-591</scope>
    <scope>FUNCTION</scope>
    <scope>CATALYTIC ACTIVITY</scope>
</reference>
<reference key="5">
    <citation type="journal article" date="2001" name="J. Chem. Ecol.">
        <title>Herbivore-induced volatile production by Arabidopsis thaliana leads to attraction of the parasitoid Cotesia rubecula: chemical, behavioral, and gene-expression analysis.</title>
        <authorList>
            <person name="Van Poecke R.M."/>
            <person name="Posthumus M.A."/>
            <person name="Dicke M."/>
        </authorList>
    </citation>
    <scope>INDUCTION BY HERBIVORY</scope>
</reference>
<reference key="6">
    <citation type="journal article" date="2002" name="Mol. Genet. Genomics">
        <title>Genomic analysis of the terpenoid synthase (AtTPS) gene family of Arabidopsis thaliana.</title>
        <authorList>
            <person name="Aubourg S."/>
            <person name="Lecharny A."/>
            <person name="Bohlmann J."/>
        </authorList>
    </citation>
    <scope>IDENTIFICATION</scope>
    <scope>GENE FAMILY</scope>
    <scope>NOMENCLATURE</scope>
</reference>
<reference key="7">
    <citation type="journal article" date="2003" name="Planta">
        <title>Functional identification of AtTPS03 as (E)-beta-ocimene synthase: a monoterpene synthase catalyzing jasmonate- and wound-induced volatile formation in Arabidopsis thaliana.</title>
        <authorList>
            <person name="Faeldt J."/>
            <person name="Arimura G."/>
            <person name="Gershenzon J."/>
            <person name="Takabayashi J."/>
            <person name="Bohlmann J."/>
        </authorList>
    </citation>
    <scope>FUNCTION</scope>
</reference>
<reference key="8">
    <citation type="journal article" date="2003" name="Plant Cell">
        <title>Biosynthesis and emission of terpenoid volatiles from Arabidopsis flowers.</title>
        <authorList>
            <person name="Chen F."/>
            <person name="Tholl D."/>
            <person name="D'Auria J.C."/>
            <person name="Farooq A."/>
            <person name="Pichersky E."/>
            <person name="Gershenzon J."/>
        </authorList>
    </citation>
    <scope>TISSUE SPECIFICITY</scope>
</reference>
<reference key="9">
    <citation type="journal article" date="2003" name="Plant Mol. Biol.">
        <title>Genome organization in Arabidopsis thaliana: a survey for genes involved in isoprenoid and chlorophyll metabolism.</title>
        <authorList>
            <person name="Lange B.M."/>
            <person name="Ghassemian M."/>
        </authorList>
    </citation>
    <scope>GENE FAMILY</scope>
</reference>
<reference key="10">
    <citation type="journal article" date="2005" name="Plant Mol. Biol.">
        <title>Expression profiling reveals COI1 to be a key regulator of genes involved in wound- and methyl jasmonate-induced secondary metabolism, defence, and hormone interactions.</title>
        <authorList>
            <person name="Devoto A."/>
            <person name="Ellis C."/>
            <person name="Magusin A."/>
            <person name="Chang H.-S."/>
            <person name="Chilcott C."/>
            <person name="Zhu T."/>
            <person name="Turner J.G."/>
        </authorList>
    </citation>
    <scope>INDUCTION BY METHYL JASMONATE</scope>
</reference>
<reference key="11">
    <citation type="journal article" date="2006" name="Arch. Biochem. Biophys.">
        <title>Microarray expression profiling and functional characterization of AtTPS genes: duplicated Arabidopsis thaliana sesquiterpene synthase genes At4g13280 and At4g13300 encode root-specific and wound-inducible (Z)-gamma-bisabolene synthases.</title>
        <authorList>
            <person name="Ro D.-K."/>
            <person name="Ehlting J."/>
            <person name="Keeling C.I."/>
            <person name="Lin R."/>
            <person name="Mattheus N."/>
            <person name="Bohlmann J."/>
        </authorList>
    </citation>
    <scope>TISSUE SPECIFICITY</scope>
</reference>
<reference key="12">
    <citation type="journal article" date="2008" name="BMC Genomics">
        <title>Comparative transcriptome analysis of Arabidopsis thaliana infested by diamond back moth (Plutella xylostella) larvae reveals signatures of stress response, secondary metabolism, and signalling.</title>
        <authorList>
            <person name="Ehlting J."/>
            <person name="Chowrira S.G."/>
            <person name="Mattheus N."/>
            <person name="Aeschliman D.S."/>
            <person name="Arimura G."/>
            <person name="Bohlmann J."/>
        </authorList>
    </citation>
    <scope>INDUCTION BY HERBIVORY</scope>
</reference>
<proteinExistence type="evidence at protein level"/>
<comment type="function">
    <text evidence="5 13">Involved in monoterpene (C10) biosynthesis. The major product is beta-myrcene (56%) followed by (E)-beta-ocimene (20%) and minor amounts (less than 5%) of the cyclic monoterpene (-)-limonene, (+)-limonene, 2-carene and tricyclene.</text>
</comment>
<comment type="catalytic activity">
    <reaction evidence="5">
        <text>(2E)-geranyl diphosphate = beta-myrcene + diphosphate</text>
        <dbReference type="Rhea" id="RHEA:16965"/>
        <dbReference type="ChEBI" id="CHEBI:17221"/>
        <dbReference type="ChEBI" id="CHEBI:33019"/>
        <dbReference type="ChEBI" id="CHEBI:58057"/>
        <dbReference type="EC" id="4.2.3.15"/>
    </reaction>
    <physiologicalReaction direction="left-to-right" evidence="5">
        <dbReference type="Rhea" id="RHEA:16966"/>
    </physiologicalReaction>
</comment>
<comment type="catalytic activity">
    <reaction evidence="5">
        <text>(2E)-geranyl diphosphate = tricyclene + diphosphate</text>
        <dbReference type="Rhea" id="RHEA:32687"/>
        <dbReference type="ChEBI" id="CHEBI:33019"/>
        <dbReference type="ChEBI" id="CHEBI:58057"/>
        <dbReference type="ChEBI" id="CHEBI:64266"/>
        <dbReference type="EC" id="4.2.3.105"/>
    </reaction>
    <physiologicalReaction direction="left-to-right" evidence="5">
        <dbReference type="Rhea" id="RHEA:32688"/>
    </physiologicalReaction>
</comment>
<comment type="catalytic activity">
    <reaction evidence="5">
        <text>(2E)-geranyl diphosphate = (E)-beta-ocimene + diphosphate</text>
        <dbReference type="Rhea" id="RHEA:32691"/>
        <dbReference type="ChEBI" id="CHEBI:33019"/>
        <dbReference type="ChEBI" id="CHEBI:58057"/>
        <dbReference type="ChEBI" id="CHEBI:64280"/>
        <dbReference type="EC" id="4.2.3.106"/>
    </reaction>
    <physiologicalReaction direction="left-to-right" evidence="5">
        <dbReference type="Rhea" id="RHEA:32692"/>
    </physiologicalReaction>
</comment>
<comment type="cofactor">
    <cofactor evidence="2">
        <name>Mg(2+)</name>
        <dbReference type="ChEBI" id="CHEBI:18420"/>
    </cofactor>
    <cofactor evidence="2">
        <name>Mn(2+)</name>
        <dbReference type="ChEBI" id="CHEBI:29035"/>
    </cofactor>
    <text evidence="2">Binds 3 Mg(2+) or Mn(2+) ions per subunit.</text>
</comment>
<comment type="pathway">
    <text>Secondary metabolite biosynthesis; terpenoid biosynthesis.</text>
</comment>
<comment type="subcellular location">
    <subcellularLocation>
        <location evidence="1">Plastid</location>
        <location evidence="1">Chloroplast stroma</location>
    </subcellularLocation>
</comment>
<comment type="tissue specificity">
    <text evidence="7 9">Predominantly expressed in flowers but also in leaves, siliques and in stems.</text>
</comment>
<comment type="induction">
    <text evidence="6 8 10">By methyl jasmonate. Also induced in response to the caterpillar P.xylostella or P.rapae feeding.</text>
</comment>
<comment type="domain">
    <text evidence="12">The Asp-Asp-Xaa-Xaa-Asp/Glu (DDXXD/E) motif is important for the catalytic activity, presumably through binding to Mg(2+).</text>
</comment>
<comment type="similarity">
    <text evidence="12">Belongs to the terpene synthase family. Tpsb subfamily.</text>
</comment>
<feature type="transit peptide" description="Chloroplast" evidence="4">
    <location>
        <begin position="1"/>
        <end position="45"/>
    </location>
</feature>
<feature type="chain" id="PRO_0000348417" description="Tricyclene synthase, chloroplastic">
    <location>
        <begin position="46"/>
        <end position="591"/>
    </location>
</feature>
<feature type="short sequence motif" description="DDXXD motif" evidence="12">
    <location>
        <begin position="339"/>
        <end position="343"/>
    </location>
</feature>
<feature type="binding site" evidence="3">
    <location>
        <position position="302"/>
    </location>
    <ligand>
        <name>(2E)-geranyl diphosphate</name>
        <dbReference type="ChEBI" id="CHEBI:58057"/>
    </ligand>
</feature>
<feature type="binding site" evidence="3">
    <location>
        <position position="339"/>
    </location>
    <ligand>
        <name>(2E)-geranyl diphosphate</name>
        <dbReference type="ChEBI" id="CHEBI:58057"/>
    </ligand>
</feature>
<feature type="binding site" evidence="2">
    <location>
        <position position="339"/>
    </location>
    <ligand>
        <name>Mg(2+)</name>
        <dbReference type="ChEBI" id="CHEBI:18420"/>
        <label>1</label>
    </ligand>
</feature>
<feature type="binding site" evidence="2">
    <location>
        <position position="339"/>
    </location>
    <ligand>
        <name>Mg(2+)</name>
        <dbReference type="ChEBI" id="CHEBI:18420"/>
        <label>2</label>
    </ligand>
</feature>
<feature type="binding site" evidence="3">
    <location>
        <position position="343"/>
    </location>
    <ligand>
        <name>(2E)-geranyl diphosphate</name>
        <dbReference type="ChEBI" id="CHEBI:58057"/>
    </ligand>
</feature>
<feature type="binding site" evidence="2">
    <location>
        <position position="343"/>
    </location>
    <ligand>
        <name>Mg(2+)</name>
        <dbReference type="ChEBI" id="CHEBI:18420"/>
        <label>1</label>
    </ligand>
</feature>
<feature type="binding site" evidence="2">
    <location>
        <position position="343"/>
    </location>
    <ligand>
        <name>Mg(2+)</name>
        <dbReference type="ChEBI" id="CHEBI:18420"/>
        <label>2</label>
    </ligand>
</feature>
<feature type="binding site" evidence="3">
    <location>
        <position position="481"/>
    </location>
    <ligand>
        <name>(2E)-geranyl diphosphate</name>
        <dbReference type="ChEBI" id="CHEBI:58057"/>
    </ligand>
</feature>
<feature type="binding site" evidence="3">
    <location>
        <position position="484"/>
    </location>
    <ligand>
        <name>(2E)-geranyl diphosphate</name>
        <dbReference type="ChEBI" id="CHEBI:58057"/>
    </ligand>
</feature>
<feature type="binding site" evidence="2">
    <location>
        <position position="484"/>
    </location>
    <ligand>
        <name>Mg(2+)</name>
        <dbReference type="ChEBI" id="CHEBI:18420"/>
        <label>3</label>
    </ligand>
</feature>
<feature type="binding site" evidence="2">
    <location>
        <position position="488"/>
    </location>
    <ligand>
        <name>Mg(2+)</name>
        <dbReference type="ChEBI" id="CHEBI:18420"/>
        <label>3</label>
    </ligand>
</feature>
<feature type="binding site" evidence="2">
    <location>
        <position position="492"/>
    </location>
    <ligand>
        <name>Mg(2+)</name>
        <dbReference type="ChEBI" id="CHEBI:18420"/>
        <label>3</label>
    </ligand>
</feature>
<name>TPSA_ARATH</name>